<organism>
    <name type="scientific">Nostoc punctiforme (strain ATCC 29133 / PCC 73102)</name>
    <dbReference type="NCBI Taxonomy" id="63737"/>
    <lineage>
        <taxon>Bacteria</taxon>
        <taxon>Bacillati</taxon>
        <taxon>Cyanobacteriota</taxon>
        <taxon>Cyanophyceae</taxon>
        <taxon>Nostocales</taxon>
        <taxon>Nostocaceae</taxon>
        <taxon>Nostoc</taxon>
    </lineage>
</organism>
<dbReference type="EMBL" id="CP001037">
    <property type="protein sequence ID" value="ACC84455.1"/>
    <property type="molecule type" value="Genomic_DNA"/>
</dbReference>
<dbReference type="RefSeq" id="WP_012412395.1">
    <property type="nucleotide sequence ID" value="NC_010628.1"/>
</dbReference>
<dbReference type="SMR" id="B2IVZ4"/>
<dbReference type="STRING" id="63737.Npun_R6169"/>
<dbReference type="EnsemblBacteria" id="ACC84455">
    <property type="protein sequence ID" value="ACC84455"/>
    <property type="gene ID" value="Npun_R6169"/>
</dbReference>
<dbReference type="KEGG" id="npu:Npun_R6169"/>
<dbReference type="eggNOG" id="COG1195">
    <property type="taxonomic scope" value="Bacteria"/>
</dbReference>
<dbReference type="HOGENOM" id="CLU_040267_0_1_3"/>
<dbReference type="OrthoDB" id="9803889at2"/>
<dbReference type="PhylomeDB" id="B2IVZ4"/>
<dbReference type="Proteomes" id="UP000001191">
    <property type="component" value="Chromosome"/>
</dbReference>
<dbReference type="GO" id="GO:0005737">
    <property type="term" value="C:cytoplasm"/>
    <property type="evidence" value="ECO:0007669"/>
    <property type="project" value="UniProtKB-SubCell"/>
</dbReference>
<dbReference type="GO" id="GO:0005524">
    <property type="term" value="F:ATP binding"/>
    <property type="evidence" value="ECO:0007669"/>
    <property type="project" value="UniProtKB-UniRule"/>
</dbReference>
<dbReference type="GO" id="GO:0003697">
    <property type="term" value="F:single-stranded DNA binding"/>
    <property type="evidence" value="ECO:0007669"/>
    <property type="project" value="UniProtKB-UniRule"/>
</dbReference>
<dbReference type="GO" id="GO:0006260">
    <property type="term" value="P:DNA replication"/>
    <property type="evidence" value="ECO:0007669"/>
    <property type="project" value="UniProtKB-UniRule"/>
</dbReference>
<dbReference type="GO" id="GO:0000731">
    <property type="term" value="P:DNA synthesis involved in DNA repair"/>
    <property type="evidence" value="ECO:0007669"/>
    <property type="project" value="TreeGrafter"/>
</dbReference>
<dbReference type="GO" id="GO:0006302">
    <property type="term" value="P:double-strand break repair"/>
    <property type="evidence" value="ECO:0007669"/>
    <property type="project" value="TreeGrafter"/>
</dbReference>
<dbReference type="GO" id="GO:0009432">
    <property type="term" value="P:SOS response"/>
    <property type="evidence" value="ECO:0007669"/>
    <property type="project" value="UniProtKB-UniRule"/>
</dbReference>
<dbReference type="CDD" id="cd03242">
    <property type="entry name" value="ABC_RecF"/>
    <property type="match status" value="1"/>
</dbReference>
<dbReference type="Gene3D" id="3.40.50.300">
    <property type="entry name" value="P-loop containing nucleotide triphosphate hydrolases"/>
    <property type="match status" value="1"/>
</dbReference>
<dbReference type="Gene3D" id="1.20.1050.90">
    <property type="entry name" value="RecF/RecN/SMC, N-terminal domain"/>
    <property type="match status" value="1"/>
</dbReference>
<dbReference type="HAMAP" id="MF_00365">
    <property type="entry name" value="RecF"/>
    <property type="match status" value="1"/>
</dbReference>
<dbReference type="InterPro" id="IPR001238">
    <property type="entry name" value="DNA-binding_RecF"/>
</dbReference>
<dbReference type="InterPro" id="IPR018078">
    <property type="entry name" value="DNA-binding_RecF_CS"/>
</dbReference>
<dbReference type="InterPro" id="IPR027417">
    <property type="entry name" value="P-loop_NTPase"/>
</dbReference>
<dbReference type="InterPro" id="IPR003395">
    <property type="entry name" value="RecF/RecN/SMC_N"/>
</dbReference>
<dbReference type="InterPro" id="IPR042174">
    <property type="entry name" value="RecF_2"/>
</dbReference>
<dbReference type="NCBIfam" id="TIGR00611">
    <property type="entry name" value="recf"/>
    <property type="match status" value="1"/>
</dbReference>
<dbReference type="PANTHER" id="PTHR32182">
    <property type="entry name" value="DNA REPLICATION AND REPAIR PROTEIN RECF"/>
    <property type="match status" value="1"/>
</dbReference>
<dbReference type="PANTHER" id="PTHR32182:SF0">
    <property type="entry name" value="DNA REPLICATION AND REPAIR PROTEIN RECF"/>
    <property type="match status" value="1"/>
</dbReference>
<dbReference type="Pfam" id="PF02463">
    <property type="entry name" value="SMC_N"/>
    <property type="match status" value="1"/>
</dbReference>
<dbReference type="SUPFAM" id="SSF52540">
    <property type="entry name" value="P-loop containing nucleoside triphosphate hydrolases"/>
    <property type="match status" value="1"/>
</dbReference>
<dbReference type="PROSITE" id="PS00617">
    <property type="entry name" value="RECF_1"/>
    <property type="match status" value="1"/>
</dbReference>
<dbReference type="PROSITE" id="PS00618">
    <property type="entry name" value="RECF_2"/>
    <property type="match status" value="1"/>
</dbReference>
<reference key="1">
    <citation type="journal article" date="2013" name="Plant Physiol.">
        <title>A Nostoc punctiforme Sugar Transporter Necessary to Establish a Cyanobacterium-Plant Symbiosis.</title>
        <authorList>
            <person name="Ekman M."/>
            <person name="Picossi S."/>
            <person name="Campbell E.L."/>
            <person name="Meeks J.C."/>
            <person name="Flores E."/>
        </authorList>
    </citation>
    <scope>NUCLEOTIDE SEQUENCE [LARGE SCALE GENOMIC DNA]</scope>
    <source>
        <strain>ATCC 29133 / PCC 73102</strain>
    </source>
</reference>
<accession>B2IVZ4</accession>
<evidence type="ECO:0000255" key="1">
    <source>
        <dbReference type="HAMAP-Rule" id="MF_00365"/>
    </source>
</evidence>
<gene>
    <name evidence="1" type="primary">recF</name>
    <name type="ordered locus">Npun_R6169</name>
</gene>
<protein>
    <recommendedName>
        <fullName evidence="1">DNA replication and repair protein RecF</fullName>
    </recommendedName>
</protein>
<comment type="function">
    <text evidence="1">The RecF protein is involved in DNA metabolism; it is required for DNA replication and normal SOS inducibility. RecF binds preferentially to single-stranded, linear DNA. It also seems to bind ATP.</text>
</comment>
<comment type="subcellular location">
    <subcellularLocation>
        <location evidence="1">Cytoplasm</location>
    </subcellularLocation>
</comment>
<comment type="similarity">
    <text evidence="1">Belongs to the RecF family.</text>
</comment>
<sequence>MYLKTLNLRQFRNYQDQKVEFTAAKTILVGNNAQGKSNLLEAVELLATLRSHRMTRDRDLVQEGEAIAQINATLERQTGVSDLTLTLRRNGRRSVALNGESIRRQMDFLGVLNAVQFSSLDLDLVRGGPEGRRNWLDTLLIQLEPVYAHILQQYNHVLRQRNAFLKRHVETLDATSLHSELAVWDAQLATTGTRVIRRRDRAIQRLAPIASAWHASISGSTEALQIKYLPNIPSEDNHPEEVQQAFLVKIQQRAIAELHQGTTLVGPHRDEIELTINQTPARQYGSQGQQRTLVLALKLAELQLIEEVVKEPPLLLLDDVLAELDLSRQNQLLDAIQDRFQTLITTTHLGSFDSQWLKSSQILFVKAGEIIPNL</sequence>
<keyword id="KW-0067">ATP-binding</keyword>
<keyword id="KW-0963">Cytoplasm</keyword>
<keyword id="KW-0227">DNA damage</keyword>
<keyword id="KW-0234">DNA repair</keyword>
<keyword id="KW-0235">DNA replication</keyword>
<keyword id="KW-0238">DNA-binding</keyword>
<keyword id="KW-0547">Nucleotide-binding</keyword>
<keyword id="KW-1185">Reference proteome</keyword>
<keyword id="KW-0742">SOS response</keyword>
<proteinExistence type="inferred from homology"/>
<feature type="chain" id="PRO_1000121135" description="DNA replication and repair protein RecF">
    <location>
        <begin position="1"/>
        <end position="374"/>
    </location>
</feature>
<feature type="binding site" evidence="1">
    <location>
        <begin position="30"/>
        <end position="37"/>
    </location>
    <ligand>
        <name>ATP</name>
        <dbReference type="ChEBI" id="CHEBI:30616"/>
    </ligand>
</feature>
<name>RECF_NOSP7</name>